<keyword id="KW-0903">Direct protein sequencing</keyword>
<keyword id="KW-0378">Hydrolase</keyword>
<keyword id="KW-0732">Signal</keyword>
<protein>
    <recommendedName>
        <fullName>Baicalin-beta-D-glucuronidase</fullName>
        <ecNumber>3.2.1.167</ecNumber>
    </recommendedName>
    <alternativeName>
        <fullName>Baicalinase</fullName>
    </alternativeName>
</protein>
<dbReference type="EC" id="3.2.1.167"/>
<dbReference type="EMBL" id="AB040072">
    <property type="protein sequence ID" value="BAA97804.1"/>
    <property type="molecule type" value="mRNA"/>
</dbReference>
<dbReference type="SMR" id="Q9LRC8"/>
<dbReference type="CAZy" id="GH79">
    <property type="family name" value="Glycoside Hydrolase Family 79"/>
</dbReference>
<dbReference type="KEGG" id="ag:BAA97804"/>
<dbReference type="BioCyc" id="MetaCyc:MONOMER-15936"/>
<dbReference type="BRENDA" id="3.2.1.167">
    <property type="organism ID" value="5639"/>
</dbReference>
<dbReference type="GO" id="GO:0016020">
    <property type="term" value="C:membrane"/>
    <property type="evidence" value="ECO:0007669"/>
    <property type="project" value="InterPro"/>
</dbReference>
<dbReference type="GO" id="GO:0009505">
    <property type="term" value="C:plant-type cell wall"/>
    <property type="evidence" value="ECO:0007669"/>
    <property type="project" value="TreeGrafter"/>
</dbReference>
<dbReference type="GO" id="GO:0052748">
    <property type="term" value="F:baicalin beta-D-glucuronidase activity"/>
    <property type="evidence" value="ECO:0000314"/>
    <property type="project" value="UniProtKB"/>
</dbReference>
<dbReference type="GO" id="GO:0004566">
    <property type="term" value="F:beta-glucuronidase activity"/>
    <property type="evidence" value="ECO:0007669"/>
    <property type="project" value="TreeGrafter"/>
</dbReference>
<dbReference type="FunFam" id="3.20.20.80:FF:000549">
    <property type="entry name" value="Predicted protein"/>
    <property type="match status" value="1"/>
</dbReference>
<dbReference type="Gene3D" id="3.20.20.80">
    <property type="entry name" value="Glycosidases"/>
    <property type="match status" value="1"/>
</dbReference>
<dbReference type="InterPro" id="IPR005199">
    <property type="entry name" value="Glyco_hydro_79"/>
</dbReference>
<dbReference type="InterPro" id="IPR017853">
    <property type="entry name" value="Glycoside_hydrolase_SF"/>
</dbReference>
<dbReference type="PANTHER" id="PTHR14363:SF17">
    <property type="entry name" value="HEPARANASE-LIKE PROTEIN 3"/>
    <property type="match status" value="1"/>
</dbReference>
<dbReference type="PANTHER" id="PTHR14363">
    <property type="entry name" value="HEPARANASE-RELATED"/>
    <property type="match status" value="1"/>
</dbReference>
<dbReference type="Pfam" id="PF03662">
    <property type="entry name" value="Glyco_hydro_79n"/>
    <property type="match status" value="1"/>
</dbReference>
<dbReference type="SUPFAM" id="SSF51445">
    <property type="entry name" value="(Trans)glycosidases"/>
    <property type="match status" value="1"/>
</dbReference>
<gene>
    <name type="primary">SGUS</name>
</gene>
<feature type="signal peptide" evidence="2">
    <location>
        <begin position="1"/>
        <end position="25"/>
    </location>
</feature>
<feature type="chain" id="PRO_0000418918" description="Baicalin-beta-D-glucuronidase">
    <location>
        <begin position="26"/>
        <end position="527"/>
    </location>
</feature>
<feature type="active site" description="Proton donor" evidence="1">
    <location>
        <position position="212"/>
    </location>
</feature>
<feature type="active site" description="Nucleophile" evidence="1">
    <location>
        <position position="329"/>
    </location>
</feature>
<feature type="mutagenesis site" description="14% reduction of activity." evidence="2">
    <original>E</original>
    <variation>A</variation>
    <location>
        <position position="194"/>
    </location>
</feature>
<feature type="mutagenesis site" description="Loss of activity." evidence="2">
    <original>E</original>
    <variation>A</variation>
    <location>
        <position position="212"/>
    </location>
</feature>
<feature type="mutagenesis site" description="6% reduction of activity." evidence="2">
    <original>E</original>
    <variation>A</variation>
    <location>
        <position position="225"/>
    </location>
</feature>
<feature type="mutagenesis site" description="30% reduction of activity." evidence="2">
    <original>E</original>
    <variation>A</variation>
    <location>
        <position position="272"/>
    </location>
</feature>
<feature type="mutagenesis site" description="Loss of activity." evidence="2">
    <original>Y</original>
    <variation>A</variation>
    <location>
        <position position="281"/>
    </location>
</feature>
<feature type="mutagenesis site" description="Loss of activity." evidence="2">
    <original>E</original>
    <variation>A</variation>
    <location>
        <position position="329"/>
    </location>
</feature>
<feature type="mutagenesis site" description="35% reduction of activity." evidence="2">
    <original>Y</original>
    <variation>A</variation>
    <location>
        <position position="376"/>
    </location>
</feature>
<organism>
    <name type="scientific">Scutellaria baicalensis</name>
    <name type="common">Baical skullcap</name>
    <dbReference type="NCBI Taxonomy" id="65409"/>
    <lineage>
        <taxon>Eukaryota</taxon>
        <taxon>Viridiplantae</taxon>
        <taxon>Streptophyta</taxon>
        <taxon>Embryophyta</taxon>
        <taxon>Tracheophyta</taxon>
        <taxon>Spermatophyta</taxon>
        <taxon>Magnoliopsida</taxon>
        <taxon>eudicotyledons</taxon>
        <taxon>Gunneridae</taxon>
        <taxon>Pentapetalae</taxon>
        <taxon>asterids</taxon>
        <taxon>lamiids</taxon>
        <taxon>Lamiales</taxon>
        <taxon>Lamiaceae</taxon>
        <taxon>Scutellarioideae</taxon>
        <taxon>Scutellaria</taxon>
    </lineage>
</organism>
<sequence>MGFQVWQKGLCVLCFSLIFICGVIGEETTIVKIEENPVAQTDENYVCATLDLWPPTKCNYGNCPWGKSSFLNLDLNNNIIRNAVKEFAPLKLRFGGTLQDRLVYQTSRDEPCDSTFYNNTNLILDFSHACLSLDRWDEINQFILETGSEAVFGLNALRGKTVEIKGIIKDGQYLGETTTAVGEWDYSNSKFLIEYSLKKGYKHIRGWTLGNELGGHTLFIGVSPEDYANDAKKLHELVKEIYQDQGTMPLIIAPGAIFDLEWYTEFIDRTPELHVATHHMYNLGSGGDDALKDVLLTASFFDEATKSMYEGLQKIVNRPGTKAVAWIGEAGGAFNSGQDGISNTFINGFWYLNMLGYSALLDTKTFCRQTLTGGNYGLLQTGTYIPNPDYYSALLWHRLMGSKVLKTEIVGTKNVYIYAHCAKKSNGITMLVLNHDGESSVKISLDPSKYGSKREEYHLTPVNNNLQSRLVKLNGELLHLDPSGVIPALNPVEKDNSKQLEVAPYSFMFVHLPGPTMFSACEKPAGK</sequence>
<proteinExistence type="evidence at protein level"/>
<evidence type="ECO:0000255" key="1"/>
<evidence type="ECO:0000269" key="2">
    <source>
    </source>
</evidence>
<evidence type="ECO:0000269" key="3">
    <source>
    </source>
</evidence>
<evidence type="ECO:0000269" key="4">
    <source ref="3"/>
</evidence>
<evidence type="ECO:0000305" key="5"/>
<name>BAGLU_SCUBA</name>
<comment type="function">
    <text evidence="2">Beta-glucuronidase involved in the initiation of H(2)O(2) metabolism via the production of baicalein. Unable to use glycyrrhizin, gypsogenin-3-O-D-glucuronide, luteolin-7-O-D-glucoside and apigenin-7-O-D-glucoside as substrates.</text>
</comment>
<comment type="catalytic activity">
    <reaction evidence="2 3 4">
        <text>baicalin + H2O = baicalein + D-glucuronate + H(+)</text>
        <dbReference type="Rhea" id="RHEA:28130"/>
        <dbReference type="ChEBI" id="CHEBI:15377"/>
        <dbReference type="ChEBI" id="CHEBI:15378"/>
        <dbReference type="ChEBI" id="CHEBI:58720"/>
        <dbReference type="ChEBI" id="CHEBI:61283"/>
        <dbReference type="ChEBI" id="CHEBI:78324"/>
        <dbReference type="EC" id="3.2.1.167"/>
    </reaction>
</comment>
<comment type="biophysicochemical properties">
    <kinetics>
        <KM evidence="2 4">9 uM for luteolin 3'-O-beta-D-glucuronide</KM>
        <KM evidence="2 4">10 uM for baicalin</KM>
        <KM evidence="2 4">30 uM for wogonin 7-O-beta-D-glucuronide</KM>
        <KM evidence="2 4">40 uM for oroxlin 7-O-beta-D-glucuronide</KM>
        <KM evidence="2 4">12 uM for baicalein 7-O-beta-D-glucuronide</KM>
        <text>kcat is 639 sec(-1) for baicalein 7-O-beta-D-glucuronide.</text>
    </kinetics>
    <phDependence>
        <text evidence="2 4">Optimum pH is 7.0-8.0.</text>
    </phDependence>
</comment>
<comment type="subunit">
    <text evidence="3">Homotetramer.</text>
</comment>
<comment type="similarity">
    <text evidence="5">Belongs to the glycosyl hydrolase 79 family.</text>
</comment>
<reference key="1">
    <citation type="journal article" date="2000" name="J. Biol. Chem.">
        <title>Molecular characterization of a novel beta-glucuronidase from Scutellaria baicalensis georgi.</title>
        <authorList>
            <person name="Sasaki K."/>
            <person name="Taura F."/>
            <person name="Shoyama Y."/>
            <person name="Morimoto S."/>
        </authorList>
    </citation>
    <scope>NUCLEOTIDE SEQUENCE [MRNA]</scope>
    <scope>PROTEIN SEQUENCE OF 26-55; 273-288; 410-423 AND 431-447</scope>
    <scope>MUTAGENESIS OF GLU-194; GLU-212; GLU-225; GLU-272; TYR-281; GLU-329 AND TYR-376</scope>
    <scope>FUNCTION</scope>
    <scope>CATALYTIC ACTIVITY</scope>
    <scope>BIOPHYSICOCHEMICAL PROPERTIES</scope>
</reference>
<reference key="2">
    <citation type="journal article" date="1995" name="Biol. Pharm. Bull.">
        <title>Purification and properties of a plant beta-D-glucuronidase form Scutellaria root.</title>
        <authorList>
            <person name="Ikegami F."/>
            <person name="Matsunae K."/>
            <person name="Hisamitsu M."/>
            <person name="Kurihara T."/>
            <person name="Yamamoto T."/>
            <person name="Murakoshi I."/>
        </authorList>
    </citation>
    <scope>CATALYTIC ACTIVITY</scope>
    <scope>SUBUNIT</scope>
</reference>
<reference key="3">
    <citation type="journal article" date="1995" name="Planta">
        <title>Purification and characterization of flavone-specific beta-glucuronidase from callus cultures of Scutellaria baicalensis Georgi.</title>
        <authorList>
            <person name="Morimoto S."/>
            <person name="Harioka T."/>
            <person name="Shoyama Y."/>
        </authorList>
    </citation>
    <scope>CATALYTIC ACTIVITY</scope>
    <scope>BIOPHYSICOCHEMICAL PROPERTIES</scope>
</reference>
<accession>Q9LRC8</accession>